<organism>
    <name type="scientific">Synechococcus sp. (strain JA-3-3Ab)</name>
    <name type="common">Cyanobacteria bacterium Yellowstone A-Prime</name>
    <dbReference type="NCBI Taxonomy" id="321327"/>
    <lineage>
        <taxon>Bacteria</taxon>
        <taxon>Bacillati</taxon>
        <taxon>Cyanobacteriota</taxon>
        <taxon>Cyanophyceae</taxon>
        <taxon>Synechococcales</taxon>
        <taxon>Synechococcaceae</taxon>
        <taxon>Synechococcus</taxon>
    </lineage>
</organism>
<comment type="function">
    <text evidence="1">Involved in the biosynthesis of isopentenyl diphosphate (IPP) and dimethylallyl diphosphate (DMAPP), two major building blocks of isoprenoid compounds. Catalyzes the conversion of 4-diphosphocytidyl-2-C-methyl-D-erythritol 2-phosphate (CDP-ME2P) to 2-C-methyl-D-erythritol 2,4-cyclodiphosphate (ME-CPP) with a corresponding release of cytidine 5-monophosphate (CMP).</text>
</comment>
<comment type="catalytic activity">
    <reaction evidence="1">
        <text>4-CDP-2-C-methyl-D-erythritol 2-phosphate = 2-C-methyl-D-erythritol 2,4-cyclic diphosphate + CMP</text>
        <dbReference type="Rhea" id="RHEA:23864"/>
        <dbReference type="ChEBI" id="CHEBI:57919"/>
        <dbReference type="ChEBI" id="CHEBI:58483"/>
        <dbReference type="ChEBI" id="CHEBI:60377"/>
        <dbReference type="EC" id="4.6.1.12"/>
    </reaction>
</comment>
<comment type="cofactor">
    <cofactor evidence="1">
        <name>a divalent metal cation</name>
        <dbReference type="ChEBI" id="CHEBI:60240"/>
    </cofactor>
    <text evidence="1">Binds 1 divalent metal cation per subunit.</text>
</comment>
<comment type="pathway">
    <text evidence="1">Isoprenoid biosynthesis; isopentenyl diphosphate biosynthesis via DXP pathway; isopentenyl diphosphate from 1-deoxy-D-xylulose 5-phosphate: step 4/6.</text>
</comment>
<comment type="subunit">
    <text evidence="1">Homotrimer.</text>
</comment>
<comment type="similarity">
    <text evidence="1">Belongs to the IspF family.</text>
</comment>
<sequence length="157" mass="17049">MRIGQGYDIHRLVEGRPLILGGIRIPYEKGLLGHSDADVLTHAIMDALLGAAALRDIGYYFPPEDERWKGADSILLLQQVVQLVGQEGWRIANVDSVVVAEQPKLKPHIPAIQARLAEAMQLSPKQVGVKATTNEKLGPVGQGEAMAAFAVVLLLER</sequence>
<keyword id="KW-0414">Isoprene biosynthesis</keyword>
<keyword id="KW-0456">Lyase</keyword>
<keyword id="KW-0479">Metal-binding</keyword>
<evidence type="ECO:0000255" key="1">
    <source>
        <dbReference type="HAMAP-Rule" id="MF_00107"/>
    </source>
</evidence>
<protein>
    <recommendedName>
        <fullName evidence="1">2-C-methyl-D-erythritol 2,4-cyclodiphosphate synthase</fullName>
        <shortName evidence="1">MECDP-synthase</shortName>
        <shortName evidence="1">MECPP-synthase</shortName>
        <shortName evidence="1">MECPS</shortName>
        <ecNumber evidence="1">4.6.1.12</ecNumber>
    </recommendedName>
</protein>
<gene>
    <name evidence="1" type="primary">ispF</name>
    <name type="ordered locus">CYA_0267</name>
</gene>
<proteinExistence type="inferred from homology"/>
<accession>Q2JXJ4</accession>
<name>ISPF_SYNJA</name>
<reference key="1">
    <citation type="journal article" date="2007" name="ISME J.">
        <title>Population level functional diversity in a microbial community revealed by comparative genomic and metagenomic analyses.</title>
        <authorList>
            <person name="Bhaya D."/>
            <person name="Grossman A.R."/>
            <person name="Steunou A.-S."/>
            <person name="Khuri N."/>
            <person name="Cohan F.M."/>
            <person name="Hamamura N."/>
            <person name="Melendrez M.C."/>
            <person name="Bateson M.M."/>
            <person name="Ward D.M."/>
            <person name="Heidelberg J.F."/>
        </authorList>
    </citation>
    <scope>NUCLEOTIDE SEQUENCE [LARGE SCALE GENOMIC DNA]</scope>
    <source>
        <strain>JA-3-3Ab</strain>
    </source>
</reference>
<dbReference type="EC" id="4.6.1.12" evidence="1"/>
<dbReference type="EMBL" id="CP000239">
    <property type="protein sequence ID" value="ABC98488.1"/>
    <property type="molecule type" value="Genomic_DNA"/>
</dbReference>
<dbReference type="RefSeq" id="WP_011429179.1">
    <property type="nucleotide sequence ID" value="NC_007775.1"/>
</dbReference>
<dbReference type="SMR" id="Q2JXJ4"/>
<dbReference type="STRING" id="321327.CYA_0267"/>
<dbReference type="KEGG" id="cya:CYA_0267"/>
<dbReference type="eggNOG" id="COG0245">
    <property type="taxonomic scope" value="Bacteria"/>
</dbReference>
<dbReference type="HOGENOM" id="CLU_084630_2_0_3"/>
<dbReference type="OrthoDB" id="9804336at2"/>
<dbReference type="UniPathway" id="UPA00056">
    <property type="reaction ID" value="UER00095"/>
</dbReference>
<dbReference type="Proteomes" id="UP000008818">
    <property type="component" value="Chromosome"/>
</dbReference>
<dbReference type="GO" id="GO:0008685">
    <property type="term" value="F:2-C-methyl-D-erythritol 2,4-cyclodiphosphate synthase activity"/>
    <property type="evidence" value="ECO:0007669"/>
    <property type="project" value="UniProtKB-UniRule"/>
</dbReference>
<dbReference type="GO" id="GO:0046872">
    <property type="term" value="F:metal ion binding"/>
    <property type="evidence" value="ECO:0007669"/>
    <property type="project" value="UniProtKB-KW"/>
</dbReference>
<dbReference type="GO" id="GO:0019288">
    <property type="term" value="P:isopentenyl diphosphate biosynthetic process, methylerythritol 4-phosphate pathway"/>
    <property type="evidence" value="ECO:0007669"/>
    <property type="project" value="UniProtKB-UniRule"/>
</dbReference>
<dbReference type="GO" id="GO:0016114">
    <property type="term" value="P:terpenoid biosynthetic process"/>
    <property type="evidence" value="ECO:0007669"/>
    <property type="project" value="InterPro"/>
</dbReference>
<dbReference type="CDD" id="cd00554">
    <property type="entry name" value="MECDP_synthase"/>
    <property type="match status" value="1"/>
</dbReference>
<dbReference type="FunFam" id="3.30.1330.50:FF:000001">
    <property type="entry name" value="2-C-methyl-D-erythritol 2,4-cyclodiphosphate synthase"/>
    <property type="match status" value="1"/>
</dbReference>
<dbReference type="Gene3D" id="3.30.1330.50">
    <property type="entry name" value="2-C-methyl-D-erythritol 2,4-cyclodiphosphate synthase"/>
    <property type="match status" value="1"/>
</dbReference>
<dbReference type="HAMAP" id="MF_00107">
    <property type="entry name" value="IspF"/>
    <property type="match status" value="1"/>
</dbReference>
<dbReference type="InterPro" id="IPR003526">
    <property type="entry name" value="MECDP_synthase"/>
</dbReference>
<dbReference type="InterPro" id="IPR020555">
    <property type="entry name" value="MECDP_synthase_CS"/>
</dbReference>
<dbReference type="InterPro" id="IPR036571">
    <property type="entry name" value="MECDP_synthase_sf"/>
</dbReference>
<dbReference type="NCBIfam" id="TIGR00151">
    <property type="entry name" value="ispF"/>
    <property type="match status" value="1"/>
</dbReference>
<dbReference type="PANTHER" id="PTHR43181">
    <property type="entry name" value="2-C-METHYL-D-ERYTHRITOL 2,4-CYCLODIPHOSPHATE SYNTHASE, CHLOROPLASTIC"/>
    <property type="match status" value="1"/>
</dbReference>
<dbReference type="PANTHER" id="PTHR43181:SF1">
    <property type="entry name" value="2-C-METHYL-D-ERYTHRITOL 2,4-CYCLODIPHOSPHATE SYNTHASE, CHLOROPLASTIC"/>
    <property type="match status" value="1"/>
</dbReference>
<dbReference type="Pfam" id="PF02542">
    <property type="entry name" value="YgbB"/>
    <property type="match status" value="1"/>
</dbReference>
<dbReference type="SUPFAM" id="SSF69765">
    <property type="entry name" value="IpsF-like"/>
    <property type="match status" value="1"/>
</dbReference>
<dbReference type="PROSITE" id="PS01350">
    <property type="entry name" value="ISPF"/>
    <property type="match status" value="1"/>
</dbReference>
<feature type="chain" id="PRO_0000237757" description="2-C-methyl-D-erythritol 2,4-cyclodiphosphate synthase">
    <location>
        <begin position="1"/>
        <end position="157"/>
    </location>
</feature>
<feature type="binding site" evidence="1">
    <location>
        <begin position="8"/>
        <end position="10"/>
    </location>
    <ligand>
        <name>4-CDP-2-C-methyl-D-erythritol 2-phosphate</name>
        <dbReference type="ChEBI" id="CHEBI:57919"/>
    </ligand>
</feature>
<feature type="binding site" evidence="1">
    <location>
        <position position="8"/>
    </location>
    <ligand>
        <name>a divalent metal cation</name>
        <dbReference type="ChEBI" id="CHEBI:60240"/>
    </ligand>
</feature>
<feature type="binding site" evidence="1">
    <location>
        <position position="10"/>
    </location>
    <ligand>
        <name>a divalent metal cation</name>
        <dbReference type="ChEBI" id="CHEBI:60240"/>
    </ligand>
</feature>
<feature type="binding site" evidence="1">
    <location>
        <begin position="34"/>
        <end position="35"/>
    </location>
    <ligand>
        <name>4-CDP-2-C-methyl-D-erythritol 2-phosphate</name>
        <dbReference type="ChEBI" id="CHEBI:57919"/>
    </ligand>
</feature>
<feature type="binding site" evidence="1">
    <location>
        <position position="42"/>
    </location>
    <ligand>
        <name>a divalent metal cation</name>
        <dbReference type="ChEBI" id="CHEBI:60240"/>
    </ligand>
</feature>
<feature type="binding site" evidence="1">
    <location>
        <begin position="56"/>
        <end position="58"/>
    </location>
    <ligand>
        <name>4-CDP-2-C-methyl-D-erythritol 2-phosphate</name>
        <dbReference type="ChEBI" id="CHEBI:57919"/>
    </ligand>
</feature>
<feature type="binding site" evidence="1">
    <location>
        <begin position="132"/>
        <end position="135"/>
    </location>
    <ligand>
        <name>4-CDP-2-C-methyl-D-erythritol 2-phosphate</name>
        <dbReference type="ChEBI" id="CHEBI:57919"/>
    </ligand>
</feature>
<feature type="site" description="Transition state stabilizer" evidence="1">
    <location>
        <position position="34"/>
    </location>
</feature>
<feature type="site" description="Transition state stabilizer" evidence="1">
    <location>
        <position position="133"/>
    </location>
</feature>